<evidence type="ECO:0000255" key="1">
    <source>
        <dbReference type="PROSITE-ProRule" id="PRU00238"/>
    </source>
</evidence>
<gene>
    <name type="primary">CTT-7B8</name>
</gene>
<keyword id="KW-0349">Heme</keyword>
<keyword id="KW-0408">Iron</keyword>
<keyword id="KW-0479">Metal-binding</keyword>
<keyword id="KW-0561">Oxygen transport</keyword>
<keyword id="KW-0732">Signal</keyword>
<keyword id="KW-0813">Transport</keyword>
<organism>
    <name type="scientific">Chironomus thummi thummi</name>
    <name type="common">Midge</name>
    <dbReference type="NCBI Taxonomy" id="7155"/>
    <lineage>
        <taxon>Eukaryota</taxon>
        <taxon>Metazoa</taxon>
        <taxon>Ecdysozoa</taxon>
        <taxon>Arthropoda</taxon>
        <taxon>Hexapoda</taxon>
        <taxon>Insecta</taxon>
        <taxon>Pterygota</taxon>
        <taxon>Neoptera</taxon>
        <taxon>Endopterygota</taxon>
        <taxon>Diptera</taxon>
        <taxon>Nematocera</taxon>
        <taxon>Chironomoidea</taxon>
        <taxon>Chironomidae</taxon>
        <taxon>Chironominae</taxon>
        <taxon>Chironomus</taxon>
    </lineage>
</organism>
<comment type="subunit">
    <text>Homodimer.</text>
</comment>
<comment type="miscellaneous">
    <text>There are at least 12 different components in Midge globin.</text>
</comment>
<comment type="miscellaneous">
    <text>There are at least nine genes for VIIB variants.</text>
</comment>
<comment type="similarity">
    <text evidence="1">Belongs to the globin family.</text>
</comment>
<name>GLB78_CHITH</name>
<reference key="1">
    <citation type="journal article" date="1995" name="J. Mol. Evol.">
        <title>Molecular evolutionary analysis of the YWVZ/7B globin gene cluster of the insect Chironomus thummi.</title>
        <authorList>
            <person name="Trewitt P.M."/>
            <person name="Luhm R.A."/>
            <person name="Samad F."/>
            <person name="Ramakrishnan S."/>
            <person name="Kao W.-Y."/>
            <person name="Bergtrom G."/>
        </authorList>
    </citation>
    <scope>NUCLEOTIDE SEQUENCE [GENOMIC DNA]</scope>
    <source>
        <tissue>Larva</tissue>
    </source>
</reference>
<feature type="signal peptide">
    <location>
        <begin position="1"/>
        <end position="16"/>
    </location>
</feature>
<feature type="chain" id="PRO_0000011202" description="Globin CTT-VIIB-8">
    <location>
        <begin position="17"/>
        <end position="161"/>
    </location>
</feature>
<feature type="domain" description="Globin" evidence="1">
    <location>
        <begin position="18"/>
        <end position="161"/>
    </location>
</feature>
<feature type="binding site" description="distal binding residue" evidence="1">
    <location>
        <position position="76"/>
    </location>
    <ligand>
        <name>heme b</name>
        <dbReference type="ChEBI" id="CHEBI:60344"/>
    </ligand>
    <ligandPart>
        <name>Fe</name>
        <dbReference type="ChEBI" id="CHEBI:18248"/>
    </ligandPart>
</feature>
<feature type="binding site" description="proximal binding residue" evidence="1">
    <location>
        <position position="111"/>
    </location>
    <ligand>
        <name>heme b</name>
        <dbReference type="ChEBI" id="CHEBI:60344"/>
    </ligand>
    <ligandPart>
        <name>Fe</name>
        <dbReference type="ChEBI" id="CHEBI:18248"/>
    </ligandPart>
</feature>
<accession>Q23763</accession>
<sequence length="161" mass="17040">MKFFAVLALCIVGAIASPLTADEASLVQSSWKAVSHNEVEILAAVFAAYPDIQNKFPQFAGKDLASIKDTGAFATHATRIVSFLSEVIALSGNESNASAVNSLVSKLGDDHKARGVSAAQFGEFRTALVAYLSNHVSWGDNVAAAWNKALDNTYAIVVPRL</sequence>
<protein>
    <recommendedName>
        <fullName>Globin CTT-VIIB-8</fullName>
    </recommendedName>
</protein>
<proteinExistence type="inferred from homology"/>
<dbReference type="EMBL" id="U07703">
    <property type="protein sequence ID" value="AAA85490.1"/>
    <property type="molecule type" value="Genomic_DNA"/>
</dbReference>
<dbReference type="SMR" id="Q23763"/>
<dbReference type="GO" id="GO:0005576">
    <property type="term" value="C:extracellular region"/>
    <property type="evidence" value="ECO:0007669"/>
    <property type="project" value="InterPro"/>
</dbReference>
<dbReference type="GO" id="GO:0005833">
    <property type="term" value="C:hemoglobin complex"/>
    <property type="evidence" value="ECO:0007669"/>
    <property type="project" value="InterPro"/>
</dbReference>
<dbReference type="GO" id="GO:0020037">
    <property type="term" value="F:heme binding"/>
    <property type="evidence" value="ECO:0007669"/>
    <property type="project" value="InterPro"/>
</dbReference>
<dbReference type="GO" id="GO:0046872">
    <property type="term" value="F:metal ion binding"/>
    <property type="evidence" value="ECO:0007669"/>
    <property type="project" value="UniProtKB-KW"/>
</dbReference>
<dbReference type="GO" id="GO:0019825">
    <property type="term" value="F:oxygen binding"/>
    <property type="evidence" value="ECO:0007669"/>
    <property type="project" value="InterPro"/>
</dbReference>
<dbReference type="GO" id="GO:0005344">
    <property type="term" value="F:oxygen carrier activity"/>
    <property type="evidence" value="ECO:0007669"/>
    <property type="project" value="UniProtKB-KW"/>
</dbReference>
<dbReference type="CDD" id="cd01040">
    <property type="entry name" value="Mb-like"/>
    <property type="match status" value="1"/>
</dbReference>
<dbReference type="Gene3D" id="1.10.490.10">
    <property type="entry name" value="Globins"/>
    <property type="match status" value="1"/>
</dbReference>
<dbReference type="InterPro" id="IPR002336">
    <property type="entry name" value="Erythrocruorin"/>
</dbReference>
<dbReference type="InterPro" id="IPR000971">
    <property type="entry name" value="Globin"/>
</dbReference>
<dbReference type="InterPro" id="IPR009050">
    <property type="entry name" value="Globin-like_sf"/>
</dbReference>
<dbReference type="InterPro" id="IPR012292">
    <property type="entry name" value="Globin/Proto"/>
</dbReference>
<dbReference type="InterPro" id="IPR044399">
    <property type="entry name" value="Mb-like_M"/>
</dbReference>
<dbReference type="PANTHER" id="PTHR47217">
    <property type="entry name" value="GLOBIN-LIKE PROTEIN"/>
    <property type="match status" value="1"/>
</dbReference>
<dbReference type="PANTHER" id="PTHR47217:SF1">
    <property type="entry name" value="GLOBIN-LIKE PROTEIN"/>
    <property type="match status" value="1"/>
</dbReference>
<dbReference type="Pfam" id="PF00042">
    <property type="entry name" value="Globin"/>
    <property type="match status" value="1"/>
</dbReference>
<dbReference type="PRINTS" id="PR00611">
    <property type="entry name" value="ERYTHCRUORIN"/>
</dbReference>
<dbReference type="SUPFAM" id="SSF46458">
    <property type="entry name" value="Globin-like"/>
    <property type="match status" value="1"/>
</dbReference>
<dbReference type="PROSITE" id="PS01033">
    <property type="entry name" value="GLOBIN"/>
    <property type="match status" value="1"/>
</dbReference>